<comment type="similarity">
    <text evidence="1">Belongs to the bacterial ribosomal protein bL33 family.</text>
</comment>
<feature type="chain" id="PRO_0000170265" description="Large ribosomal subunit protein bL33">
    <location>
        <begin position="1"/>
        <end position="55"/>
    </location>
</feature>
<reference key="1">
    <citation type="journal article" date="2002" name="Nat. Genet.">
        <title>Genome sequence of the endocellular obligate symbiont of tsetse flies, Wigglesworthia glossinidia.</title>
        <authorList>
            <person name="Akman L."/>
            <person name="Yamashita A."/>
            <person name="Watanabe H."/>
            <person name="Oshima K."/>
            <person name="Shiba T."/>
            <person name="Hattori M."/>
            <person name="Aksoy S."/>
        </authorList>
    </citation>
    <scope>NUCLEOTIDE SEQUENCE [LARGE SCALE GENOMIC DNA]</scope>
</reference>
<name>RL33_WIGBR</name>
<sequence>MSKSKREVIKLISSAGTKHFYTTTKNKSHNLKKIKLKKFDPVIKKHVIYNEAKLK</sequence>
<keyword id="KW-1185">Reference proteome</keyword>
<keyword id="KW-0687">Ribonucleoprotein</keyword>
<keyword id="KW-0689">Ribosomal protein</keyword>
<accession>Q8D2F0</accession>
<protein>
    <recommendedName>
        <fullName evidence="1">Large ribosomal subunit protein bL33</fullName>
    </recommendedName>
    <alternativeName>
        <fullName evidence="2">50S ribosomal protein L33</fullName>
    </alternativeName>
</protein>
<gene>
    <name evidence="1" type="primary">rpmG</name>
    <name type="ordered locus">WIGBR4040</name>
</gene>
<proteinExistence type="inferred from homology"/>
<dbReference type="EMBL" id="BA000021">
    <property type="protein sequence ID" value="BAC24550.1"/>
    <property type="molecule type" value="Genomic_DNA"/>
</dbReference>
<dbReference type="SMR" id="Q8D2F0"/>
<dbReference type="STRING" id="36870.gene:10368905"/>
<dbReference type="KEGG" id="wbr:rpmG"/>
<dbReference type="eggNOG" id="COG0267">
    <property type="taxonomic scope" value="Bacteria"/>
</dbReference>
<dbReference type="HOGENOM" id="CLU_190949_1_1_6"/>
<dbReference type="Proteomes" id="UP000000562">
    <property type="component" value="Chromosome"/>
</dbReference>
<dbReference type="GO" id="GO:0022625">
    <property type="term" value="C:cytosolic large ribosomal subunit"/>
    <property type="evidence" value="ECO:0007669"/>
    <property type="project" value="TreeGrafter"/>
</dbReference>
<dbReference type="GO" id="GO:0003735">
    <property type="term" value="F:structural constituent of ribosome"/>
    <property type="evidence" value="ECO:0007669"/>
    <property type="project" value="InterPro"/>
</dbReference>
<dbReference type="GO" id="GO:0006412">
    <property type="term" value="P:translation"/>
    <property type="evidence" value="ECO:0007669"/>
    <property type="project" value="UniProtKB-UniRule"/>
</dbReference>
<dbReference type="Gene3D" id="2.20.28.120">
    <property type="entry name" value="Ribosomal protein L33"/>
    <property type="match status" value="1"/>
</dbReference>
<dbReference type="HAMAP" id="MF_00294">
    <property type="entry name" value="Ribosomal_bL33"/>
    <property type="match status" value="1"/>
</dbReference>
<dbReference type="InterPro" id="IPR001705">
    <property type="entry name" value="Ribosomal_bL33"/>
</dbReference>
<dbReference type="InterPro" id="IPR038584">
    <property type="entry name" value="Ribosomal_bL33_sf"/>
</dbReference>
<dbReference type="InterPro" id="IPR011332">
    <property type="entry name" value="Ribosomal_zn-bd"/>
</dbReference>
<dbReference type="NCBIfam" id="NF001860">
    <property type="entry name" value="PRK00595.1"/>
    <property type="match status" value="1"/>
</dbReference>
<dbReference type="NCBIfam" id="TIGR01023">
    <property type="entry name" value="rpmG_bact"/>
    <property type="match status" value="1"/>
</dbReference>
<dbReference type="PANTHER" id="PTHR15238">
    <property type="entry name" value="54S RIBOSOMAL PROTEIN L39, MITOCHONDRIAL"/>
    <property type="match status" value="1"/>
</dbReference>
<dbReference type="PANTHER" id="PTHR15238:SF1">
    <property type="entry name" value="LARGE RIBOSOMAL SUBUNIT PROTEIN BL33M"/>
    <property type="match status" value="1"/>
</dbReference>
<dbReference type="Pfam" id="PF00471">
    <property type="entry name" value="Ribosomal_L33"/>
    <property type="match status" value="1"/>
</dbReference>
<dbReference type="SUPFAM" id="SSF57829">
    <property type="entry name" value="Zn-binding ribosomal proteins"/>
    <property type="match status" value="1"/>
</dbReference>
<evidence type="ECO:0000255" key="1">
    <source>
        <dbReference type="HAMAP-Rule" id="MF_00294"/>
    </source>
</evidence>
<evidence type="ECO:0000305" key="2"/>
<organism>
    <name type="scientific">Wigglesworthia glossinidia brevipalpis</name>
    <dbReference type="NCBI Taxonomy" id="36870"/>
    <lineage>
        <taxon>Bacteria</taxon>
        <taxon>Pseudomonadati</taxon>
        <taxon>Pseudomonadota</taxon>
        <taxon>Gammaproteobacteria</taxon>
        <taxon>Enterobacterales</taxon>
        <taxon>Erwiniaceae</taxon>
        <taxon>Wigglesworthia</taxon>
    </lineage>
</organism>